<accession>Q12X87</accession>
<organism>
    <name type="scientific">Methanococcoides burtonii (strain DSM 6242 / NBRC 107633 / OCM 468 / ACE-M)</name>
    <dbReference type="NCBI Taxonomy" id="259564"/>
    <lineage>
        <taxon>Archaea</taxon>
        <taxon>Methanobacteriati</taxon>
        <taxon>Methanobacteriota</taxon>
        <taxon>Stenosarchaea group</taxon>
        <taxon>Methanomicrobia</taxon>
        <taxon>Methanosarcinales</taxon>
        <taxon>Methanosarcinaceae</taxon>
        <taxon>Methanococcoides</taxon>
    </lineage>
</organism>
<dbReference type="EC" id="4.1.1.23" evidence="1"/>
<dbReference type="EMBL" id="CP000300">
    <property type="protein sequence ID" value="ABE51939.1"/>
    <property type="molecule type" value="Genomic_DNA"/>
</dbReference>
<dbReference type="RefSeq" id="WP_011499088.1">
    <property type="nucleotide sequence ID" value="NC_007955.1"/>
</dbReference>
<dbReference type="SMR" id="Q12X87"/>
<dbReference type="STRING" id="259564.Mbur_1000"/>
<dbReference type="GeneID" id="3998105"/>
<dbReference type="KEGG" id="mbu:Mbur_1000"/>
<dbReference type="HOGENOM" id="CLU_067069_2_0_2"/>
<dbReference type="OrthoDB" id="94124at2157"/>
<dbReference type="UniPathway" id="UPA00070">
    <property type="reaction ID" value="UER00120"/>
</dbReference>
<dbReference type="Proteomes" id="UP000001979">
    <property type="component" value="Chromosome"/>
</dbReference>
<dbReference type="GO" id="GO:0005829">
    <property type="term" value="C:cytosol"/>
    <property type="evidence" value="ECO:0007669"/>
    <property type="project" value="TreeGrafter"/>
</dbReference>
<dbReference type="GO" id="GO:0004590">
    <property type="term" value="F:orotidine-5'-phosphate decarboxylase activity"/>
    <property type="evidence" value="ECO:0007669"/>
    <property type="project" value="UniProtKB-UniRule"/>
</dbReference>
<dbReference type="GO" id="GO:0006207">
    <property type="term" value="P:'de novo' pyrimidine nucleobase biosynthetic process"/>
    <property type="evidence" value="ECO:0007669"/>
    <property type="project" value="InterPro"/>
</dbReference>
<dbReference type="GO" id="GO:0044205">
    <property type="term" value="P:'de novo' UMP biosynthetic process"/>
    <property type="evidence" value="ECO:0007669"/>
    <property type="project" value="UniProtKB-UniRule"/>
</dbReference>
<dbReference type="CDD" id="cd04725">
    <property type="entry name" value="OMP_decarboxylase_like"/>
    <property type="match status" value="1"/>
</dbReference>
<dbReference type="Gene3D" id="3.20.20.70">
    <property type="entry name" value="Aldolase class I"/>
    <property type="match status" value="1"/>
</dbReference>
<dbReference type="HAMAP" id="MF_01200_A">
    <property type="entry name" value="OMPdecase_type1_A"/>
    <property type="match status" value="1"/>
</dbReference>
<dbReference type="InterPro" id="IPR013785">
    <property type="entry name" value="Aldolase_TIM"/>
</dbReference>
<dbReference type="InterPro" id="IPR014732">
    <property type="entry name" value="OMPdecase"/>
</dbReference>
<dbReference type="InterPro" id="IPR047595">
    <property type="entry name" value="OMPdecase_arc"/>
</dbReference>
<dbReference type="InterPro" id="IPR001754">
    <property type="entry name" value="OMPdeCOase_dom"/>
</dbReference>
<dbReference type="InterPro" id="IPR011060">
    <property type="entry name" value="RibuloseP-bd_barrel"/>
</dbReference>
<dbReference type="NCBIfam" id="NF010386">
    <property type="entry name" value="PRK13813.1"/>
    <property type="match status" value="1"/>
</dbReference>
<dbReference type="NCBIfam" id="TIGR01740">
    <property type="entry name" value="pyrF"/>
    <property type="match status" value="1"/>
</dbReference>
<dbReference type="PANTHER" id="PTHR32119">
    <property type="entry name" value="OROTIDINE 5'-PHOSPHATE DECARBOXYLASE"/>
    <property type="match status" value="1"/>
</dbReference>
<dbReference type="PANTHER" id="PTHR32119:SF2">
    <property type="entry name" value="OROTIDINE 5'-PHOSPHATE DECARBOXYLASE"/>
    <property type="match status" value="1"/>
</dbReference>
<dbReference type="Pfam" id="PF00215">
    <property type="entry name" value="OMPdecase"/>
    <property type="match status" value="1"/>
</dbReference>
<dbReference type="SMART" id="SM00934">
    <property type="entry name" value="OMPdecase"/>
    <property type="match status" value="1"/>
</dbReference>
<dbReference type="SUPFAM" id="SSF51366">
    <property type="entry name" value="Ribulose-phoshate binding barrel"/>
    <property type="match status" value="1"/>
</dbReference>
<comment type="function">
    <text evidence="1">Catalyzes the decarboxylation of orotidine 5'-monophosphate (OMP) to uridine 5'-monophosphate (UMP).</text>
</comment>
<comment type="catalytic activity">
    <reaction evidence="1">
        <text>orotidine 5'-phosphate + H(+) = UMP + CO2</text>
        <dbReference type="Rhea" id="RHEA:11596"/>
        <dbReference type="ChEBI" id="CHEBI:15378"/>
        <dbReference type="ChEBI" id="CHEBI:16526"/>
        <dbReference type="ChEBI" id="CHEBI:57538"/>
        <dbReference type="ChEBI" id="CHEBI:57865"/>
        <dbReference type="EC" id="4.1.1.23"/>
    </reaction>
</comment>
<comment type="pathway">
    <text evidence="1">Pyrimidine metabolism; UMP biosynthesis via de novo pathway; UMP from orotate: step 2/2.</text>
</comment>
<comment type="subunit">
    <text evidence="1">Homodimer.</text>
</comment>
<comment type="similarity">
    <text evidence="1">Belongs to the OMP decarboxylase family. Type 1 subfamily.</text>
</comment>
<keyword id="KW-0210">Decarboxylase</keyword>
<keyword id="KW-0456">Lyase</keyword>
<keyword id="KW-0665">Pyrimidine biosynthesis</keyword>
<protein>
    <recommendedName>
        <fullName evidence="1">Orotidine 5'-phosphate decarboxylase</fullName>
        <ecNumber evidence="1">4.1.1.23</ecNumber>
    </recommendedName>
    <alternativeName>
        <fullName evidence="1">OMP decarboxylase</fullName>
        <shortName evidence="1">OMPDCase</shortName>
        <shortName evidence="1">OMPdecase</shortName>
    </alternativeName>
</protein>
<name>PYRF_METBU</name>
<proteinExistence type="inferred from homology"/>
<feature type="chain" id="PRO_1000065919" description="Orotidine 5'-phosphate decarboxylase">
    <location>
        <begin position="1"/>
        <end position="215"/>
    </location>
</feature>
<feature type="active site" description="Proton donor" evidence="1">
    <location>
        <position position="62"/>
    </location>
</feature>
<feature type="binding site" evidence="1">
    <location>
        <position position="12"/>
    </location>
    <ligand>
        <name>substrate</name>
    </ligand>
</feature>
<feature type="binding site" evidence="1">
    <location>
        <position position="34"/>
    </location>
    <ligand>
        <name>substrate</name>
    </ligand>
</feature>
<feature type="binding site" evidence="1">
    <location>
        <begin position="60"/>
        <end position="69"/>
    </location>
    <ligand>
        <name>substrate</name>
    </ligand>
</feature>
<feature type="binding site" evidence="1">
    <location>
        <position position="117"/>
    </location>
    <ligand>
        <name>substrate</name>
    </ligand>
</feature>
<feature type="binding site" evidence="1">
    <location>
        <begin position="170"/>
        <end position="180"/>
    </location>
    <ligand>
        <name>substrate</name>
    </ligand>
</feature>
<feature type="binding site" evidence="1">
    <location>
        <position position="193"/>
    </location>
    <ligand>
        <name>substrate</name>
    </ligand>
</feature>
<feature type="binding site" evidence="1">
    <location>
        <position position="194"/>
    </location>
    <ligand>
        <name>substrate</name>
    </ligand>
</feature>
<evidence type="ECO:0000255" key="1">
    <source>
        <dbReference type="HAMAP-Rule" id="MF_01200"/>
    </source>
</evidence>
<gene>
    <name evidence="1" type="primary">pyrF</name>
    <name type="ordered locus">Mbur_1000</name>
</gene>
<sequence length="215" mass="22814">MEKKNRLILALDVTDRENALRIANEVSDYVDSIKVGYPLVLGEGLSIVKELVEIAPVIADFKVADIPNTDRLICEHVFNAGAAGIITHGFTGRDSLDSCVKVANEFGTDVYVVTEMSHPGGVEFFRPVAEDIASMAVEAGASGVVAPATRPERVKDIRKIIGEELSIISPGVGAQGGSAADVIRAGADWVIVGRSIYNSDSPAEAAKKICDEMNC</sequence>
<reference key="1">
    <citation type="journal article" date="2009" name="ISME J.">
        <title>The genome sequence of the psychrophilic archaeon, Methanococcoides burtonii: the role of genome evolution in cold adaptation.</title>
        <authorList>
            <person name="Allen M.A."/>
            <person name="Lauro F.M."/>
            <person name="Williams T.J."/>
            <person name="Burg D."/>
            <person name="Siddiqui K.S."/>
            <person name="De Francisci D."/>
            <person name="Chong K.W."/>
            <person name="Pilak O."/>
            <person name="Chew H.H."/>
            <person name="De Maere M.Z."/>
            <person name="Ting L."/>
            <person name="Katrib M."/>
            <person name="Ng C."/>
            <person name="Sowers K.R."/>
            <person name="Galperin M.Y."/>
            <person name="Anderson I.J."/>
            <person name="Ivanova N."/>
            <person name="Dalin E."/>
            <person name="Martinez M."/>
            <person name="Lapidus A."/>
            <person name="Hauser L."/>
            <person name="Land M."/>
            <person name="Thomas T."/>
            <person name="Cavicchioli R."/>
        </authorList>
    </citation>
    <scope>NUCLEOTIDE SEQUENCE [LARGE SCALE GENOMIC DNA]</scope>
    <source>
        <strain>DSM 6242 / NBRC 107633 / OCM 468 / ACE-M</strain>
    </source>
</reference>